<organism>
    <name type="scientific">Schizosaccharomyces pombe (strain 972 / ATCC 24843)</name>
    <name type="common">Fission yeast</name>
    <dbReference type="NCBI Taxonomy" id="284812"/>
    <lineage>
        <taxon>Eukaryota</taxon>
        <taxon>Fungi</taxon>
        <taxon>Dikarya</taxon>
        <taxon>Ascomycota</taxon>
        <taxon>Taphrinomycotina</taxon>
        <taxon>Schizosaccharomycetes</taxon>
        <taxon>Schizosaccharomycetales</taxon>
        <taxon>Schizosaccharomycetaceae</taxon>
        <taxon>Schizosaccharomyces</taxon>
    </lineage>
</organism>
<dbReference type="EMBL" id="CU329670">
    <property type="protein sequence ID" value="CBA11499.1"/>
    <property type="molecule type" value="Genomic_DNA"/>
</dbReference>
<dbReference type="RefSeq" id="XP_002742508.1">
    <property type="nucleotide sequence ID" value="XM_002742462.2"/>
</dbReference>
<dbReference type="ComplexPortal" id="CPX-25764">
    <property type="entry name" value="Mitochondrial proton translocating ATP synthase complex"/>
</dbReference>
<dbReference type="FunCoup" id="C6Y4A3">
    <property type="interactions" value="67"/>
</dbReference>
<dbReference type="STRING" id="284812.C6Y4A3"/>
<dbReference type="iPTMnet" id="C6Y4A3"/>
<dbReference type="PaxDb" id="4896-SPAC25H1.10c.1"/>
<dbReference type="EnsemblFungi" id="SPAC25H1.10c.1">
    <property type="protein sequence ID" value="SPAC25H1.10c.1:pep"/>
    <property type="gene ID" value="SPAC25H1.10c"/>
</dbReference>
<dbReference type="PomBase" id="SPAC25H1.10c">
    <property type="gene designation" value="atp19"/>
</dbReference>
<dbReference type="VEuPathDB" id="FungiDB:SPAC25H1.10c"/>
<dbReference type="eggNOG" id="ENOG502RDPM">
    <property type="taxonomic scope" value="Eukaryota"/>
</dbReference>
<dbReference type="HOGENOM" id="CLU_172736_1_0_1"/>
<dbReference type="InParanoid" id="C6Y4A3"/>
<dbReference type="OMA" id="MSVYTIA"/>
<dbReference type="PRO" id="PR:C6Y4A3"/>
<dbReference type="Proteomes" id="UP000002485">
    <property type="component" value="Chromosome I"/>
</dbReference>
<dbReference type="GO" id="GO:0099617">
    <property type="term" value="C:matrix side of mitochondrial inner membrane"/>
    <property type="evidence" value="ECO:0000305"/>
    <property type="project" value="PomBase"/>
</dbReference>
<dbReference type="GO" id="GO:0045259">
    <property type="term" value="C:proton-transporting ATP synthase complex"/>
    <property type="evidence" value="ECO:0000266"/>
    <property type="project" value="PomBase"/>
</dbReference>
<dbReference type="GO" id="GO:0015986">
    <property type="term" value="P:proton motive force-driven ATP synthesis"/>
    <property type="evidence" value="ECO:0000318"/>
    <property type="project" value="GO_Central"/>
</dbReference>
<dbReference type="GO" id="GO:0042776">
    <property type="term" value="P:proton motive force-driven mitochondrial ATP synthesis"/>
    <property type="evidence" value="ECO:0000266"/>
    <property type="project" value="PomBase"/>
</dbReference>
<dbReference type="GO" id="GO:1902600">
    <property type="term" value="P:proton transmembrane transport"/>
    <property type="evidence" value="ECO:0007669"/>
    <property type="project" value="UniProtKB-KW"/>
</dbReference>
<dbReference type="InterPro" id="IPR021278">
    <property type="entry name" value="ATP19"/>
</dbReference>
<dbReference type="PANTHER" id="PTHR28074">
    <property type="entry name" value="ATP SYNTHASE SUBUNIT K, MITOCHONDRIAL"/>
    <property type="match status" value="1"/>
</dbReference>
<dbReference type="PANTHER" id="PTHR28074:SF1">
    <property type="entry name" value="ATP SYNTHASE SUBUNIT K, MITOCHONDRIAL"/>
    <property type="match status" value="1"/>
</dbReference>
<dbReference type="Pfam" id="PF11022">
    <property type="entry name" value="ATP19"/>
    <property type="match status" value="1"/>
</dbReference>
<feature type="chain" id="PRO_0000389140" description="ATP synthase subunit K, mitochondrial">
    <location>
        <begin position="1"/>
        <end position="68"/>
    </location>
</feature>
<feature type="transmembrane region" description="Helical" evidence="2">
    <location>
        <begin position="13"/>
        <end position="35"/>
    </location>
</feature>
<reference key="1">
    <citation type="journal article" date="2002" name="Nature">
        <title>The genome sequence of Schizosaccharomyces pombe.</title>
        <authorList>
            <person name="Wood V."/>
            <person name="Gwilliam R."/>
            <person name="Rajandream M.A."/>
            <person name="Lyne M.H."/>
            <person name="Lyne R."/>
            <person name="Stewart A."/>
            <person name="Sgouros J.G."/>
            <person name="Peat N."/>
            <person name="Hayles J."/>
            <person name="Baker S.G."/>
            <person name="Basham D."/>
            <person name="Bowman S."/>
            <person name="Brooks K."/>
            <person name="Brown D."/>
            <person name="Brown S."/>
            <person name="Chillingworth T."/>
            <person name="Churcher C.M."/>
            <person name="Collins M."/>
            <person name="Connor R."/>
            <person name="Cronin A."/>
            <person name="Davis P."/>
            <person name="Feltwell T."/>
            <person name="Fraser A."/>
            <person name="Gentles S."/>
            <person name="Goble A."/>
            <person name="Hamlin N."/>
            <person name="Harris D.E."/>
            <person name="Hidalgo J."/>
            <person name="Hodgson G."/>
            <person name="Holroyd S."/>
            <person name="Hornsby T."/>
            <person name="Howarth S."/>
            <person name="Huckle E.J."/>
            <person name="Hunt S."/>
            <person name="Jagels K."/>
            <person name="James K.D."/>
            <person name="Jones L."/>
            <person name="Jones M."/>
            <person name="Leather S."/>
            <person name="McDonald S."/>
            <person name="McLean J."/>
            <person name="Mooney P."/>
            <person name="Moule S."/>
            <person name="Mungall K.L."/>
            <person name="Murphy L.D."/>
            <person name="Niblett D."/>
            <person name="Odell C."/>
            <person name="Oliver K."/>
            <person name="O'Neil S."/>
            <person name="Pearson D."/>
            <person name="Quail M.A."/>
            <person name="Rabbinowitsch E."/>
            <person name="Rutherford K.M."/>
            <person name="Rutter S."/>
            <person name="Saunders D."/>
            <person name="Seeger K."/>
            <person name="Sharp S."/>
            <person name="Skelton J."/>
            <person name="Simmonds M.N."/>
            <person name="Squares R."/>
            <person name="Squares S."/>
            <person name="Stevens K."/>
            <person name="Taylor K."/>
            <person name="Taylor R.G."/>
            <person name="Tivey A."/>
            <person name="Walsh S.V."/>
            <person name="Warren T."/>
            <person name="Whitehead S."/>
            <person name="Woodward J.R."/>
            <person name="Volckaert G."/>
            <person name="Aert R."/>
            <person name="Robben J."/>
            <person name="Grymonprez B."/>
            <person name="Weltjens I."/>
            <person name="Vanstreels E."/>
            <person name="Rieger M."/>
            <person name="Schaefer M."/>
            <person name="Mueller-Auer S."/>
            <person name="Gabel C."/>
            <person name="Fuchs M."/>
            <person name="Duesterhoeft A."/>
            <person name="Fritzc C."/>
            <person name="Holzer E."/>
            <person name="Moestl D."/>
            <person name="Hilbert H."/>
            <person name="Borzym K."/>
            <person name="Langer I."/>
            <person name="Beck A."/>
            <person name="Lehrach H."/>
            <person name="Reinhardt R."/>
            <person name="Pohl T.M."/>
            <person name="Eger P."/>
            <person name="Zimmermann W."/>
            <person name="Wedler H."/>
            <person name="Wambutt R."/>
            <person name="Purnelle B."/>
            <person name="Goffeau A."/>
            <person name="Cadieu E."/>
            <person name="Dreano S."/>
            <person name="Gloux S."/>
            <person name="Lelaure V."/>
            <person name="Mottier S."/>
            <person name="Galibert F."/>
            <person name="Aves S.J."/>
            <person name="Xiang Z."/>
            <person name="Hunt C."/>
            <person name="Moore K."/>
            <person name="Hurst S.M."/>
            <person name="Lucas M."/>
            <person name="Rochet M."/>
            <person name="Gaillardin C."/>
            <person name="Tallada V.A."/>
            <person name="Garzon A."/>
            <person name="Thode G."/>
            <person name="Daga R.R."/>
            <person name="Cruzado L."/>
            <person name="Jimenez J."/>
            <person name="Sanchez M."/>
            <person name="del Rey F."/>
            <person name="Benito J."/>
            <person name="Dominguez A."/>
            <person name="Revuelta J.L."/>
            <person name="Moreno S."/>
            <person name="Armstrong J."/>
            <person name="Forsburg S.L."/>
            <person name="Cerutti L."/>
            <person name="Lowe T."/>
            <person name="McCombie W.R."/>
            <person name="Paulsen I."/>
            <person name="Potashkin J."/>
            <person name="Shpakovski G.V."/>
            <person name="Ussery D."/>
            <person name="Barrell B.G."/>
            <person name="Nurse P."/>
        </authorList>
    </citation>
    <scope>NUCLEOTIDE SEQUENCE [LARGE SCALE GENOMIC DNA]</scope>
    <source>
        <strain>972 / ATCC 24843</strain>
    </source>
</reference>
<reference key="2">
    <citation type="journal article" date="2008" name="Nature">
        <title>Dynamic repertoire of a eukaryotic transcriptome surveyed at single-nucleotide resolution.</title>
        <authorList>
            <person name="Wilhelm B.T."/>
            <person name="Marguerat S."/>
            <person name="Watt S."/>
            <person name="Schubert F."/>
            <person name="Wood V."/>
            <person name="Goodhead I."/>
            <person name="Penkett C.J."/>
            <person name="Rogers J."/>
            <person name="Baehler J."/>
        </authorList>
    </citation>
    <scope>IDENTIFICATION</scope>
</reference>
<protein>
    <recommendedName>
        <fullName>ATP synthase subunit K, mitochondrial</fullName>
    </recommendedName>
</protein>
<gene>
    <name type="primary">atp19</name>
    <name type="ORF">SPAC25H1.10c</name>
</gene>
<comment type="function">
    <text evidence="1">Mitochondrial membrane ATP synthase (F(1)F(0) ATP synthase or Complex V) produces ATP from ADP in the presence of a proton gradient across the membrane which is generated by electron transport complexes of the respiratory chain. F-type ATPases consist of two structural domains, F(1) - containing the extramembraneous catalytic core and F(0) - containing the membrane proton channel, linked together by a central stalk and a peripheral stalk. During catalysis, ATP synthesis in the catalytic domain of F(1) is coupled via a rotary mechanism of the central stalk subunits to proton translocation. Part of the complex F(0) domain. Minor subunit located with subunit a in the membrane. The K chain binds the dimeric form by interacting with the G and E chains (By similarity).</text>
</comment>
<comment type="subunit">
    <text evidence="1">F-type ATPases have 2 components, CF(1) - the catalytic core - and CF(0) - the membrane proton channel.</text>
</comment>
<comment type="subcellular location">
    <subcellularLocation>
        <location evidence="1">Mitochondrion inner membrane</location>
        <topology evidence="1">Single-pass membrane protein</topology>
    </subcellularLocation>
</comment>
<comment type="similarity">
    <text evidence="3">Belongs to the ATP19 family.</text>
</comment>
<proteinExistence type="evidence at transcript level"/>
<keyword id="KW-0066">ATP synthesis</keyword>
<keyword id="KW-0138">CF(0)</keyword>
<keyword id="KW-0375">Hydrogen ion transport</keyword>
<keyword id="KW-0406">Ion transport</keyword>
<keyword id="KW-0472">Membrane</keyword>
<keyword id="KW-0496">Mitochondrion</keyword>
<keyword id="KW-0999">Mitochondrion inner membrane</keyword>
<keyword id="KW-1185">Reference proteome</keyword>
<keyword id="KW-0812">Transmembrane</keyword>
<keyword id="KW-1133">Transmembrane helix</keyword>
<keyword id="KW-0813">Transport</keyword>
<sequence>MSVYTIAGRQFQAHQLSLAVLGSVFVGPVIYSKLFKRNKPLSAKDVPPLNAKSKEEEEFILKYIEEHK</sequence>
<evidence type="ECO:0000250" key="1"/>
<evidence type="ECO:0000255" key="2"/>
<evidence type="ECO:0000305" key="3"/>
<accession>C6Y4A3</accession>
<name>ATP19_SCHPO</name>